<keyword id="KW-1185">Reference proteome</keyword>
<keyword id="KW-0687">Ribonucleoprotein</keyword>
<keyword id="KW-0689">Ribosomal protein</keyword>
<organism>
    <name type="scientific">Bacillus cereus (strain ATCC 14579 / DSM 31 / CCUG 7414 / JCM 2152 / NBRC 15305 / NCIMB 9373 / NCTC 2599 / NRRL B-3711)</name>
    <dbReference type="NCBI Taxonomy" id="226900"/>
    <lineage>
        <taxon>Bacteria</taxon>
        <taxon>Bacillati</taxon>
        <taxon>Bacillota</taxon>
        <taxon>Bacilli</taxon>
        <taxon>Bacillales</taxon>
        <taxon>Bacillaceae</taxon>
        <taxon>Bacillus</taxon>
        <taxon>Bacillus cereus group</taxon>
    </lineage>
</organism>
<comment type="function">
    <text evidence="1">Involved in the binding of tRNA to the ribosomes.</text>
</comment>
<comment type="subunit">
    <text evidence="1">Part of the 30S ribosomal subunit.</text>
</comment>
<comment type="similarity">
    <text evidence="1">Belongs to the universal ribosomal protein uS10 family.</text>
</comment>
<dbReference type="EMBL" id="AE016877">
    <property type="protein sequence ID" value="AAP07211.1"/>
    <property type="molecule type" value="Genomic_DNA"/>
</dbReference>
<dbReference type="RefSeq" id="NP_830010.1">
    <property type="nucleotide sequence ID" value="NC_004722.1"/>
</dbReference>
<dbReference type="RefSeq" id="WP_001040596.1">
    <property type="nucleotide sequence ID" value="NZ_CP138336.1"/>
</dbReference>
<dbReference type="SMR" id="Q81J43"/>
<dbReference type="STRING" id="226900.BC_0130"/>
<dbReference type="MetOSite" id="Q81J43"/>
<dbReference type="GeneID" id="93010944"/>
<dbReference type="KEGG" id="bce:BC0130"/>
<dbReference type="PATRIC" id="fig|226900.8.peg.131"/>
<dbReference type="HOGENOM" id="CLU_122625_1_3_9"/>
<dbReference type="OrthoDB" id="9804464at2"/>
<dbReference type="PRO" id="PR:Q81J43"/>
<dbReference type="Proteomes" id="UP000001417">
    <property type="component" value="Chromosome"/>
</dbReference>
<dbReference type="GO" id="GO:0015935">
    <property type="term" value="C:small ribosomal subunit"/>
    <property type="evidence" value="ECO:0000318"/>
    <property type="project" value="GO_Central"/>
</dbReference>
<dbReference type="GO" id="GO:0003735">
    <property type="term" value="F:structural constituent of ribosome"/>
    <property type="evidence" value="ECO:0000318"/>
    <property type="project" value="GO_Central"/>
</dbReference>
<dbReference type="GO" id="GO:0000049">
    <property type="term" value="F:tRNA binding"/>
    <property type="evidence" value="ECO:0007669"/>
    <property type="project" value="UniProtKB-UniRule"/>
</dbReference>
<dbReference type="GO" id="GO:0006412">
    <property type="term" value="P:translation"/>
    <property type="evidence" value="ECO:0007669"/>
    <property type="project" value="UniProtKB-UniRule"/>
</dbReference>
<dbReference type="FunFam" id="3.30.70.600:FF:000001">
    <property type="entry name" value="30S ribosomal protein S10"/>
    <property type="match status" value="1"/>
</dbReference>
<dbReference type="Gene3D" id="3.30.70.600">
    <property type="entry name" value="Ribosomal protein S10 domain"/>
    <property type="match status" value="1"/>
</dbReference>
<dbReference type="HAMAP" id="MF_00508">
    <property type="entry name" value="Ribosomal_uS10"/>
    <property type="match status" value="1"/>
</dbReference>
<dbReference type="InterPro" id="IPR001848">
    <property type="entry name" value="Ribosomal_uS10"/>
</dbReference>
<dbReference type="InterPro" id="IPR018268">
    <property type="entry name" value="Ribosomal_uS10_CS"/>
</dbReference>
<dbReference type="InterPro" id="IPR027486">
    <property type="entry name" value="Ribosomal_uS10_dom"/>
</dbReference>
<dbReference type="InterPro" id="IPR036838">
    <property type="entry name" value="Ribosomal_uS10_dom_sf"/>
</dbReference>
<dbReference type="NCBIfam" id="NF001861">
    <property type="entry name" value="PRK00596.1"/>
    <property type="match status" value="1"/>
</dbReference>
<dbReference type="NCBIfam" id="TIGR01049">
    <property type="entry name" value="rpsJ_bact"/>
    <property type="match status" value="1"/>
</dbReference>
<dbReference type="PANTHER" id="PTHR11700">
    <property type="entry name" value="30S RIBOSOMAL PROTEIN S10 FAMILY MEMBER"/>
    <property type="match status" value="1"/>
</dbReference>
<dbReference type="Pfam" id="PF00338">
    <property type="entry name" value="Ribosomal_S10"/>
    <property type="match status" value="1"/>
</dbReference>
<dbReference type="PRINTS" id="PR00971">
    <property type="entry name" value="RIBOSOMALS10"/>
</dbReference>
<dbReference type="SMART" id="SM01403">
    <property type="entry name" value="Ribosomal_S10"/>
    <property type="match status" value="1"/>
</dbReference>
<dbReference type="SUPFAM" id="SSF54999">
    <property type="entry name" value="Ribosomal protein S10"/>
    <property type="match status" value="1"/>
</dbReference>
<dbReference type="PROSITE" id="PS00361">
    <property type="entry name" value="RIBOSOMAL_S10"/>
    <property type="match status" value="1"/>
</dbReference>
<gene>
    <name evidence="1" type="primary">rpsJ</name>
    <name type="ordered locus">BC_0130</name>
</gene>
<accession>Q81J43</accession>
<reference key="1">
    <citation type="journal article" date="2003" name="Nature">
        <title>Genome sequence of Bacillus cereus and comparative analysis with Bacillus anthracis.</title>
        <authorList>
            <person name="Ivanova N."/>
            <person name="Sorokin A."/>
            <person name="Anderson I."/>
            <person name="Galleron N."/>
            <person name="Candelon B."/>
            <person name="Kapatral V."/>
            <person name="Bhattacharyya A."/>
            <person name="Reznik G."/>
            <person name="Mikhailova N."/>
            <person name="Lapidus A."/>
            <person name="Chu L."/>
            <person name="Mazur M."/>
            <person name="Goltsman E."/>
            <person name="Larsen N."/>
            <person name="D'Souza M."/>
            <person name="Walunas T."/>
            <person name="Grechkin Y."/>
            <person name="Pusch G."/>
            <person name="Haselkorn R."/>
            <person name="Fonstein M."/>
            <person name="Ehrlich S.D."/>
            <person name="Overbeek R."/>
            <person name="Kyrpides N.C."/>
        </authorList>
    </citation>
    <scope>NUCLEOTIDE SEQUENCE [LARGE SCALE GENOMIC DNA]</scope>
    <source>
        <strain>ATCC 14579 / DSM 31 / CCUG 7414 / JCM 2152 / NBRC 15305 / NCIMB 9373 / NCTC 2599 / NRRL B-3711</strain>
    </source>
</reference>
<name>RS10_BACCR</name>
<proteinExistence type="inferred from homology"/>
<evidence type="ECO:0000255" key="1">
    <source>
        <dbReference type="HAMAP-Rule" id="MF_00508"/>
    </source>
</evidence>
<evidence type="ECO:0000305" key="2"/>
<protein>
    <recommendedName>
        <fullName evidence="1">Small ribosomal subunit protein uS10</fullName>
    </recommendedName>
    <alternativeName>
        <fullName evidence="2">30S ribosomal protein S10</fullName>
    </alternativeName>
</protein>
<sequence length="102" mass="11684">MAKEKIRIRLKAYDHRILDQSAEKIVETAKRSGATVSGPIPLPTEKTVYTILRAVHKYKDSREQFEMRTHKRLIDIVSPTPQTVDSLMRLDLPSGVDIEIKL</sequence>
<feature type="chain" id="PRO_0000146491" description="Small ribosomal subunit protein uS10">
    <location>
        <begin position="1"/>
        <end position="102"/>
    </location>
</feature>